<accession>A9IM16</accession>
<protein>
    <recommendedName>
        <fullName evidence="1">Glycerol-3-phosphate dehydrogenase [NAD(P)+]</fullName>
        <ecNumber evidence="1">1.1.1.94</ecNumber>
    </recommendedName>
    <alternativeName>
        <fullName evidence="1">NAD(P)(+)-dependent glycerol-3-phosphate dehydrogenase</fullName>
    </alternativeName>
    <alternativeName>
        <fullName evidence="1">NAD(P)H-dependent dihydroxyacetone-phosphate reductase</fullName>
    </alternativeName>
</protein>
<comment type="function">
    <text evidence="1">Catalyzes the reduction of the glycolytic intermediate dihydroxyacetone phosphate (DHAP) to sn-glycerol 3-phosphate (G3P), the key precursor for phospholipid synthesis.</text>
</comment>
<comment type="catalytic activity">
    <reaction evidence="1">
        <text>sn-glycerol 3-phosphate + NAD(+) = dihydroxyacetone phosphate + NADH + H(+)</text>
        <dbReference type="Rhea" id="RHEA:11092"/>
        <dbReference type="ChEBI" id="CHEBI:15378"/>
        <dbReference type="ChEBI" id="CHEBI:57540"/>
        <dbReference type="ChEBI" id="CHEBI:57597"/>
        <dbReference type="ChEBI" id="CHEBI:57642"/>
        <dbReference type="ChEBI" id="CHEBI:57945"/>
        <dbReference type="EC" id="1.1.1.94"/>
    </reaction>
    <physiologicalReaction direction="right-to-left" evidence="1">
        <dbReference type="Rhea" id="RHEA:11094"/>
    </physiologicalReaction>
</comment>
<comment type="catalytic activity">
    <reaction evidence="1">
        <text>sn-glycerol 3-phosphate + NADP(+) = dihydroxyacetone phosphate + NADPH + H(+)</text>
        <dbReference type="Rhea" id="RHEA:11096"/>
        <dbReference type="ChEBI" id="CHEBI:15378"/>
        <dbReference type="ChEBI" id="CHEBI:57597"/>
        <dbReference type="ChEBI" id="CHEBI:57642"/>
        <dbReference type="ChEBI" id="CHEBI:57783"/>
        <dbReference type="ChEBI" id="CHEBI:58349"/>
        <dbReference type="EC" id="1.1.1.94"/>
    </reaction>
    <physiologicalReaction direction="right-to-left" evidence="1">
        <dbReference type="Rhea" id="RHEA:11098"/>
    </physiologicalReaction>
</comment>
<comment type="pathway">
    <text evidence="1">Membrane lipid metabolism; glycerophospholipid metabolism.</text>
</comment>
<comment type="subcellular location">
    <subcellularLocation>
        <location evidence="1">Cytoplasm</location>
    </subcellularLocation>
</comment>
<comment type="similarity">
    <text evidence="1">Belongs to the NAD-dependent glycerol-3-phosphate dehydrogenase family.</text>
</comment>
<name>GPDA_BART1</name>
<dbReference type="EC" id="1.1.1.94" evidence="1"/>
<dbReference type="EMBL" id="AM260525">
    <property type="protein sequence ID" value="CAK00625.1"/>
    <property type="molecule type" value="Genomic_DNA"/>
</dbReference>
<dbReference type="RefSeq" id="WP_012230472.1">
    <property type="nucleotide sequence ID" value="NC_010161.1"/>
</dbReference>
<dbReference type="SMR" id="A9IM16"/>
<dbReference type="KEGG" id="btr:BT_0137"/>
<dbReference type="eggNOG" id="COG0240">
    <property type="taxonomic scope" value="Bacteria"/>
</dbReference>
<dbReference type="HOGENOM" id="CLU_033449_0_2_5"/>
<dbReference type="UniPathway" id="UPA00940"/>
<dbReference type="Proteomes" id="UP000001592">
    <property type="component" value="Chromosome"/>
</dbReference>
<dbReference type="GO" id="GO:0005829">
    <property type="term" value="C:cytosol"/>
    <property type="evidence" value="ECO:0007669"/>
    <property type="project" value="TreeGrafter"/>
</dbReference>
<dbReference type="GO" id="GO:0047952">
    <property type="term" value="F:glycerol-3-phosphate dehydrogenase [NAD(P)+] activity"/>
    <property type="evidence" value="ECO:0007669"/>
    <property type="project" value="UniProtKB-UniRule"/>
</dbReference>
<dbReference type="GO" id="GO:0051287">
    <property type="term" value="F:NAD binding"/>
    <property type="evidence" value="ECO:0007669"/>
    <property type="project" value="InterPro"/>
</dbReference>
<dbReference type="GO" id="GO:0005975">
    <property type="term" value="P:carbohydrate metabolic process"/>
    <property type="evidence" value="ECO:0007669"/>
    <property type="project" value="InterPro"/>
</dbReference>
<dbReference type="GO" id="GO:0046167">
    <property type="term" value="P:glycerol-3-phosphate biosynthetic process"/>
    <property type="evidence" value="ECO:0007669"/>
    <property type="project" value="UniProtKB-UniRule"/>
</dbReference>
<dbReference type="GO" id="GO:0046168">
    <property type="term" value="P:glycerol-3-phosphate catabolic process"/>
    <property type="evidence" value="ECO:0007669"/>
    <property type="project" value="InterPro"/>
</dbReference>
<dbReference type="GO" id="GO:0046474">
    <property type="term" value="P:glycerophospholipid biosynthetic process"/>
    <property type="evidence" value="ECO:0007669"/>
    <property type="project" value="TreeGrafter"/>
</dbReference>
<dbReference type="FunFam" id="1.10.1040.10:FF:000001">
    <property type="entry name" value="Glycerol-3-phosphate dehydrogenase [NAD(P)+]"/>
    <property type="match status" value="1"/>
</dbReference>
<dbReference type="FunFam" id="3.40.50.720:FF:000019">
    <property type="entry name" value="Glycerol-3-phosphate dehydrogenase [NAD(P)+]"/>
    <property type="match status" value="1"/>
</dbReference>
<dbReference type="Gene3D" id="1.10.1040.10">
    <property type="entry name" value="N-(1-d-carboxylethyl)-l-norvaline Dehydrogenase, domain 2"/>
    <property type="match status" value="1"/>
</dbReference>
<dbReference type="Gene3D" id="3.40.50.720">
    <property type="entry name" value="NAD(P)-binding Rossmann-like Domain"/>
    <property type="match status" value="1"/>
</dbReference>
<dbReference type="HAMAP" id="MF_00394">
    <property type="entry name" value="NAD_Glyc3P_dehydrog"/>
    <property type="match status" value="1"/>
</dbReference>
<dbReference type="InterPro" id="IPR008927">
    <property type="entry name" value="6-PGluconate_DH-like_C_sf"/>
</dbReference>
<dbReference type="InterPro" id="IPR013328">
    <property type="entry name" value="6PGD_dom2"/>
</dbReference>
<dbReference type="InterPro" id="IPR006168">
    <property type="entry name" value="G3P_DH_NAD-dep"/>
</dbReference>
<dbReference type="InterPro" id="IPR006109">
    <property type="entry name" value="G3P_DH_NAD-dep_C"/>
</dbReference>
<dbReference type="InterPro" id="IPR011128">
    <property type="entry name" value="G3P_DH_NAD-dep_N"/>
</dbReference>
<dbReference type="InterPro" id="IPR036291">
    <property type="entry name" value="NAD(P)-bd_dom_sf"/>
</dbReference>
<dbReference type="NCBIfam" id="NF000939">
    <property type="entry name" value="PRK00094.1-1"/>
    <property type="match status" value="1"/>
</dbReference>
<dbReference type="NCBIfam" id="NF000940">
    <property type="entry name" value="PRK00094.1-2"/>
    <property type="match status" value="1"/>
</dbReference>
<dbReference type="NCBIfam" id="NF000942">
    <property type="entry name" value="PRK00094.1-4"/>
    <property type="match status" value="1"/>
</dbReference>
<dbReference type="PANTHER" id="PTHR11728">
    <property type="entry name" value="GLYCEROL-3-PHOSPHATE DEHYDROGENASE"/>
    <property type="match status" value="1"/>
</dbReference>
<dbReference type="PANTHER" id="PTHR11728:SF1">
    <property type="entry name" value="GLYCEROL-3-PHOSPHATE DEHYDROGENASE [NAD(+)] 2, CHLOROPLASTIC"/>
    <property type="match status" value="1"/>
</dbReference>
<dbReference type="Pfam" id="PF07479">
    <property type="entry name" value="NAD_Gly3P_dh_C"/>
    <property type="match status" value="1"/>
</dbReference>
<dbReference type="Pfam" id="PF01210">
    <property type="entry name" value="NAD_Gly3P_dh_N"/>
    <property type="match status" value="1"/>
</dbReference>
<dbReference type="PIRSF" id="PIRSF000114">
    <property type="entry name" value="Glycerol-3-P_dh"/>
    <property type="match status" value="1"/>
</dbReference>
<dbReference type="PRINTS" id="PR00077">
    <property type="entry name" value="GPDHDRGNASE"/>
</dbReference>
<dbReference type="SUPFAM" id="SSF48179">
    <property type="entry name" value="6-phosphogluconate dehydrogenase C-terminal domain-like"/>
    <property type="match status" value="1"/>
</dbReference>
<dbReference type="SUPFAM" id="SSF51735">
    <property type="entry name" value="NAD(P)-binding Rossmann-fold domains"/>
    <property type="match status" value="1"/>
</dbReference>
<dbReference type="PROSITE" id="PS00957">
    <property type="entry name" value="NAD_G3PDH"/>
    <property type="match status" value="1"/>
</dbReference>
<sequence length="334" mass="36410">MKTIAMTIIGAGSFGTALAIALARNGHSVLLWGYNPQHIKKLQEQRCNQVYLPDIRFPENLLLEASLETAITASDNILIAVPSHVFHQVLYNIQPYLDQHSRVIWATKGLEHGTGRFLQEVAREILGEKIPLAVFSGPTFAKELAIGWPTAMTIAASDAEFGKELQQLFHCDKSFRVYKSSDMIGVQLGGAVKNVIAIGAGISDGMGFGANARIALITRGLAEISRLGSAMGAELSTFMGMTGLGDLVLTCTDNQSRNRRFGILLGKGIDIKEAEKQIGQVVEGYLNTKEVYTLAKRIGVEMPIVEQIYQILYCGKNITEAANTLLSRTLKDEI</sequence>
<gene>
    <name evidence="1" type="primary">gpsA</name>
    <name type="ordered locus">BT_0137</name>
</gene>
<feature type="chain" id="PRO_1000080298" description="Glycerol-3-phosphate dehydrogenase [NAD(P)+]">
    <location>
        <begin position="1"/>
        <end position="334"/>
    </location>
</feature>
<feature type="active site" description="Proton acceptor" evidence="1">
    <location>
        <position position="193"/>
    </location>
</feature>
<feature type="binding site" evidence="1">
    <location>
        <position position="13"/>
    </location>
    <ligand>
        <name>NADPH</name>
        <dbReference type="ChEBI" id="CHEBI:57783"/>
    </ligand>
</feature>
<feature type="binding site" evidence="1">
    <location>
        <position position="14"/>
    </location>
    <ligand>
        <name>NADPH</name>
        <dbReference type="ChEBI" id="CHEBI:57783"/>
    </ligand>
</feature>
<feature type="binding site" evidence="1">
    <location>
        <position position="108"/>
    </location>
    <ligand>
        <name>NADPH</name>
        <dbReference type="ChEBI" id="CHEBI:57783"/>
    </ligand>
</feature>
<feature type="binding site" evidence="1">
    <location>
        <position position="108"/>
    </location>
    <ligand>
        <name>sn-glycerol 3-phosphate</name>
        <dbReference type="ChEBI" id="CHEBI:57597"/>
    </ligand>
</feature>
<feature type="binding site" evidence="1">
    <location>
        <position position="137"/>
    </location>
    <ligand>
        <name>sn-glycerol 3-phosphate</name>
        <dbReference type="ChEBI" id="CHEBI:57597"/>
    </ligand>
</feature>
<feature type="binding site" evidence="1">
    <location>
        <position position="139"/>
    </location>
    <ligand>
        <name>sn-glycerol 3-phosphate</name>
        <dbReference type="ChEBI" id="CHEBI:57597"/>
    </ligand>
</feature>
<feature type="binding site" evidence="1">
    <location>
        <position position="141"/>
    </location>
    <ligand>
        <name>NADPH</name>
        <dbReference type="ChEBI" id="CHEBI:57783"/>
    </ligand>
</feature>
<feature type="binding site" evidence="1">
    <location>
        <position position="193"/>
    </location>
    <ligand>
        <name>sn-glycerol 3-phosphate</name>
        <dbReference type="ChEBI" id="CHEBI:57597"/>
    </ligand>
</feature>
<feature type="binding site" evidence="1">
    <location>
        <position position="246"/>
    </location>
    <ligand>
        <name>sn-glycerol 3-phosphate</name>
        <dbReference type="ChEBI" id="CHEBI:57597"/>
    </ligand>
</feature>
<feature type="binding site" evidence="1">
    <location>
        <position position="256"/>
    </location>
    <ligand>
        <name>sn-glycerol 3-phosphate</name>
        <dbReference type="ChEBI" id="CHEBI:57597"/>
    </ligand>
</feature>
<feature type="binding site" evidence="1">
    <location>
        <position position="257"/>
    </location>
    <ligand>
        <name>NADPH</name>
        <dbReference type="ChEBI" id="CHEBI:57783"/>
    </ligand>
</feature>
<feature type="binding site" evidence="1">
    <location>
        <position position="257"/>
    </location>
    <ligand>
        <name>sn-glycerol 3-phosphate</name>
        <dbReference type="ChEBI" id="CHEBI:57597"/>
    </ligand>
</feature>
<feature type="binding site" evidence="1">
    <location>
        <position position="258"/>
    </location>
    <ligand>
        <name>sn-glycerol 3-phosphate</name>
        <dbReference type="ChEBI" id="CHEBI:57597"/>
    </ligand>
</feature>
<feature type="binding site" evidence="1">
    <location>
        <position position="281"/>
    </location>
    <ligand>
        <name>NADPH</name>
        <dbReference type="ChEBI" id="CHEBI:57783"/>
    </ligand>
</feature>
<feature type="binding site" evidence="1">
    <location>
        <position position="283"/>
    </location>
    <ligand>
        <name>NADPH</name>
        <dbReference type="ChEBI" id="CHEBI:57783"/>
    </ligand>
</feature>
<reference key="1">
    <citation type="journal article" date="2007" name="Nat. Genet.">
        <title>Genomic analysis of Bartonella identifies type IV secretion systems as host adaptability factors.</title>
        <authorList>
            <person name="Saenz H.L."/>
            <person name="Engel P."/>
            <person name="Stoeckli M.C."/>
            <person name="Lanz C."/>
            <person name="Raddatz G."/>
            <person name="Vayssier-Taussat M."/>
            <person name="Birtles R."/>
            <person name="Schuster S.C."/>
            <person name="Dehio C."/>
        </authorList>
    </citation>
    <scope>NUCLEOTIDE SEQUENCE [LARGE SCALE GENOMIC DNA]</scope>
    <source>
        <strain>CIP 105476 / IBS 506</strain>
    </source>
</reference>
<keyword id="KW-0963">Cytoplasm</keyword>
<keyword id="KW-0444">Lipid biosynthesis</keyword>
<keyword id="KW-0443">Lipid metabolism</keyword>
<keyword id="KW-0520">NAD</keyword>
<keyword id="KW-0521">NADP</keyword>
<keyword id="KW-0547">Nucleotide-binding</keyword>
<keyword id="KW-0560">Oxidoreductase</keyword>
<keyword id="KW-0594">Phospholipid biosynthesis</keyword>
<keyword id="KW-1208">Phospholipid metabolism</keyword>
<organism>
    <name type="scientific">Bartonella tribocorum (strain CIP 105476 / IBS 506)</name>
    <dbReference type="NCBI Taxonomy" id="382640"/>
    <lineage>
        <taxon>Bacteria</taxon>
        <taxon>Pseudomonadati</taxon>
        <taxon>Pseudomonadota</taxon>
        <taxon>Alphaproteobacteria</taxon>
        <taxon>Hyphomicrobiales</taxon>
        <taxon>Bartonellaceae</taxon>
        <taxon>Bartonella</taxon>
    </lineage>
</organism>
<evidence type="ECO:0000255" key="1">
    <source>
        <dbReference type="HAMAP-Rule" id="MF_00394"/>
    </source>
</evidence>
<proteinExistence type="inferred from homology"/>